<evidence type="ECO:0000255" key="1">
    <source>
        <dbReference type="HAMAP-Rule" id="MF_00531"/>
    </source>
</evidence>
<evidence type="ECO:0000305" key="2"/>
<keyword id="KW-0687">Ribonucleoprotein</keyword>
<keyword id="KW-0689">Ribosomal protein</keyword>
<keyword id="KW-0694">RNA-binding</keyword>
<keyword id="KW-0699">rRNA-binding</keyword>
<sequence length="91" mass="10259">MPRSLKKGPFLDLHLLKKVEKAVESGDKKPIKTWSRRSMIIPSMIGLTIAVHNGRQHVPVYVSDEMIGHKLGEFAPTRTYRGHAADKKAKK</sequence>
<name>RS19_HISS2</name>
<comment type="function">
    <text evidence="1">Protein S19 forms a complex with S13 that binds strongly to the 16S ribosomal RNA.</text>
</comment>
<comment type="similarity">
    <text evidence="1">Belongs to the universal ribosomal protein uS19 family.</text>
</comment>
<protein>
    <recommendedName>
        <fullName evidence="1">Small ribosomal subunit protein uS19</fullName>
    </recommendedName>
    <alternativeName>
        <fullName evidence="2">30S ribosomal protein S19</fullName>
    </alternativeName>
</protein>
<dbReference type="EMBL" id="CP000947">
    <property type="protein sequence ID" value="ACA31750.1"/>
    <property type="molecule type" value="Genomic_DNA"/>
</dbReference>
<dbReference type="RefSeq" id="WP_005539416.1">
    <property type="nucleotide sequence ID" value="NC_010519.1"/>
</dbReference>
<dbReference type="SMR" id="B0UX17"/>
<dbReference type="STRING" id="228400.HSM_1956"/>
<dbReference type="GeneID" id="93298793"/>
<dbReference type="KEGG" id="hsm:HSM_1956"/>
<dbReference type="HOGENOM" id="CLU_144911_0_1_6"/>
<dbReference type="GO" id="GO:0005737">
    <property type="term" value="C:cytoplasm"/>
    <property type="evidence" value="ECO:0007669"/>
    <property type="project" value="UniProtKB-ARBA"/>
</dbReference>
<dbReference type="GO" id="GO:0015935">
    <property type="term" value="C:small ribosomal subunit"/>
    <property type="evidence" value="ECO:0007669"/>
    <property type="project" value="InterPro"/>
</dbReference>
<dbReference type="GO" id="GO:0019843">
    <property type="term" value="F:rRNA binding"/>
    <property type="evidence" value="ECO:0007669"/>
    <property type="project" value="UniProtKB-UniRule"/>
</dbReference>
<dbReference type="GO" id="GO:0003735">
    <property type="term" value="F:structural constituent of ribosome"/>
    <property type="evidence" value="ECO:0007669"/>
    <property type="project" value="InterPro"/>
</dbReference>
<dbReference type="GO" id="GO:0000028">
    <property type="term" value="P:ribosomal small subunit assembly"/>
    <property type="evidence" value="ECO:0007669"/>
    <property type="project" value="TreeGrafter"/>
</dbReference>
<dbReference type="GO" id="GO:0006412">
    <property type="term" value="P:translation"/>
    <property type="evidence" value="ECO:0007669"/>
    <property type="project" value="UniProtKB-UniRule"/>
</dbReference>
<dbReference type="FunFam" id="3.30.860.10:FF:000001">
    <property type="entry name" value="30S ribosomal protein S19"/>
    <property type="match status" value="1"/>
</dbReference>
<dbReference type="Gene3D" id="3.30.860.10">
    <property type="entry name" value="30s Ribosomal Protein S19, Chain A"/>
    <property type="match status" value="1"/>
</dbReference>
<dbReference type="HAMAP" id="MF_00531">
    <property type="entry name" value="Ribosomal_uS19"/>
    <property type="match status" value="1"/>
</dbReference>
<dbReference type="InterPro" id="IPR002222">
    <property type="entry name" value="Ribosomal_uS19"/>
</dbReference>
<dbReference type="InterPro" id="IPR005732">
    <property type="entry name" value="Ribosomal_uS19_bac-type"/>
</dbReference>
<dbReference type="InterPro" id="IPR020934">
    <property type="entry name" value="Ribosomal_uS19_CS"/>
</dbReference>
<dbReference type="InterPro" id="IPR023575">
    <property type="entry name" value="Ribosomal_uS19_SF"/>
</dbReference>
<dbReference type="NCBIfam" id="TIGR01050">
    <property type="entry name" value="rpsS_bact"/>
    <property type="match status" value="1"/>
</dbReference>
<dbReference type="PANTHER" id="PTHR11880">
    <property type="entry name" value="RIBOSOMAL PROTEIN S19P FAMILY MEMBER"/>
    <property type="match status" value="1"/>
</dbReference>
<dbReference type="PANTHER" id="PTHR11880:SF8">
    <property type="entry name" value="SMALL RIBOSOMAL SUBUNIT PROTEIN US19M"/>
    <property type="match status" value="1"/>
</dbReference>
<dbReference type="Pfam" id="PF00203">
    <property type="entry name" value="Ribosomal_S19"/>
    <property type="match status" value="1"/>
</dbReference>
<dbReference type="PIRSF" id="PIRSF002144">
    <property type="entry name" value="Ribosomal_S19"/>
    <property type="match status" value="1"/>
</dbReference>
<dbReference type="PRINTS" id="PR00975">
    <property type="entry name" value="RIBOSOMALS19"/>
</dbReference>
<dbReference type="SUPFAM" id="SSF54570">
    <property type="entry name" value="Ribosomal protein S19"/>
    <property type="match status" value="1"/>
</dbReference>
<dbReference type="PROSITE" id="PS00323">
    <property type="entry name" value="RIBOSOMAL_S19"/>
    <property type="match status" value="1"/>
</dbReference>
<accession>B0UX17</accession>
<reference key="1">
    <citation type="submission" date="2008-02" db="EMBL/GenBank/DDBJ databases">
        <title>Complete sequence of Haemophilus somnus 2336.</title>
        <authorList>
            <consortium name="US DOE Joint Genome Institute"/>
            <person name="Siddaramappa S."/>
            <person name="Duncan A.J."/>
            <person name="Challacombe J.F."/>
            <person name="Rainey D."/>
            <person name="Gillaspy A.F."/>
            <person name="Carson M."/>
            <person name="Gipson J."/>
            <person name="Gipson M."/>
            <person name="Bruce D."/>
            <person name="Detter J.C."/>
            <person name="Han C.S."/>
            <person name="Land M."/>
            <person name="Tapia R."/>
            <person name="Thompson L.S."/>
            <person name="Orvis J."/>
            <person name="Zaitshik J."/>
            <person name="Barnes G."/>
            <person name="Brettin T.S."/>
            <person name="Dyer D.W."/>
            <person name="Inzana T.J."/>
        </authorList>
    </citation>
    <scope>NUCLEOTIDE SEQUENCE [LARGE SCALE GENOMIC DNA]</scope>
    <source>
        <strain>2336</strain>
    </source>
</reference>
<organism>
    <name type="scientific">Histophilus somni (strain 2336)</name>
    <name type="common">Haemophilus somnus</name>
    <dbReference type="NCBI Taxonomy" id="228400"/>
    <lineage>
        <taxon>Bacteria</taxon>
        <taxon>Pseudomonadati</taxon>
        <taxon>Pseudomonadota</taxon>
        <taxon>Gammaproteobacteria</taxon>
        <taxon>Pasteurellales</taxon>
        <taxon>Pasteurellaceae</taxon>
        <taxon>Histophilus</taxon>
    </lineage>
</organism>
<gene>
    <name evidence="1" type="primary">rpsS</name>
    <name type="ordered locus">HSM_1956</name>
</gene>
<proteinExistence type="inferred from homology"/>
<feature type="chain" id="PRO_1000081775" description="Small ribosomal subunit protein uS19">
    <location>
        <begin position="1"/>
        <end position="91"/>
    </location>
</feature>